<proteinExistence type="inferred from homology"/>
<evidence type="ECO:0000255" key="1">
    <source>
        <dbReference type="HAMAP-Rule" id="MF_00211"/>
    </source>
</evidence>
<protein>
    <recommendedName>
        <fullName evidence="1">Anthranilate phosphoribosyltransferase</fullName>
        <ecNumber evidence="1">2.4.2.18</ecNumber>
    </recommendedName>
</protein>
<reference key="1">
    <citation type="journal article" date="2002" name="DNA Res.">
        <title>Complete genome structure of the thermophilic cyanobacterium Thermosynechococcus elongatus BP-1.</title>
        <authorList>
            <person name="Nakamura Y."/>
            <person name="Kaneko T."/>
            <person name="Sato S."/>
            <person name="Ikeuchi M."/>
            <person name="Katoh H."/>
            <person name="Sasamoto S."/>
            <person name="Watanabe A."/>
            <person name="Iriguchi M."/>
            <person name="Kawashima K."/>
            <person name="Kimura T."/>
            <person name="Kishida Y."/>
            <person name="Kiyokawa C."/>
            <person name="Kohara M."/>
            <person name="Matsumoto M."/>
            <person name="Matsuno A."/>
            <person name="Nakazaki N."/>
            <person name="Shimpo S."/>
            <person name="Sugimoto M."/>
            <person name="Takeuchi C."/>
            <person name="Yamada M."/>
            <person name="Tabata S."/>
        </authorList>
    </citation>
    <scope>NUCLEOTIDE SEQUENCE [LARGE SCALE GENOMIC DNA]</scope>
    <source>
        <strain>NIES-2133 / IAM M-273 / BP-1</strain>
    </source>
</reference>
<gene>
    <name evidence="1" type="primary">trpD</name>
    <name type="ordered locus">tll1714</name>
</gene>
<keyword id="KW-0028">Amino-acid biosynthesis</keyword>
<keyword id="KW-0057">Aromatic amino acid biosynthesis</keyword>
<keyword id="KW-0328">Glycosyltransferase</keyword>
<keyword id="KW-0460">Magnesium</keyword>
<keyword id="KW-0479">Metal-binding</keyword>
<keyword id="KW-1185">Reference proteome</keyword>
<keyword id="KW-0808">Transferase</keyword>
<keyword id="KW-0822">Tryptophan biosynthesis</keyword>
<organism>
    <name type="scientific">Thermosynechococcus vestitus (strain NIES-2133 / IAM M-273 / BP-1)</name>
    <dbReference type="NCBI Taxonomy" id="197221"/>
    <lineage>
        <taxon>Bacteria</taxon>
        <taxon>Bacillati</taxon>
        <taxon>Cyanobacteriota</taxon>
        <taxon>Cyanophyceae</taxon>
        <taxon>Acaryochloridales</taxon>
        <taxon>Thermosynechococcaceae</taxon>
        <taxon>Thermosynechococcus</taxon>
    </lineage>
</organism>
<sequence>MWSDLLQQLLDRQALTQEQAAQLMQGWLAEEIPDALSGAILTALQLKGLTVEELTGMANVLLAQSAGAPLNLAEPLIDTCGTGGDRAGTFNISTAVAFVVAAAGVKVAKHGNRSVSSRVGSADVLETLGVNLAHSDPAFLLKEVGITFLFAPGWHPAMKAVAPLRRTLKTRTVFNLLGPLVNPLYPTGQVIGIFSDRYLEAVAGTLQRLGRQRGIVLYGREGVDEATLGNMTDLVMFSGPEESLRQEVLDPQALGLASAPLRDLAGGDLQTNAAILTHVLQGKGTSAQQNVVALNAALALYVAAAVENWWEGVDRAKAILASGAAWDKLQALVTLSNES</sequence>
<name>TRPD_THEVB</name>
<comment type="function">
    <text evidence="1">Catalyzes the transfer of the phosphoribosyl group of 5-phosphorylribose-1-pyrophosphate (PRPP) to anthranilate to yield N-(5'-phosphoribosyl)-anthranilate (PRA).</text>
</comment>
<comment type="catalytic activity">
    <reaction evidence="1">
        <text>N-(5-phospho-beta-D-ribosyl)anthranilate + diphosphate = 5-phospho-alpha-D-ribose 1-diphosphate + anthranilate</text>
        <dbReference type="Rhea" id="RHEA:11768"/>
        <dbReference type="ChEBI" id="CHEBI:16567"/>
        <dbReference type="ChEBI" id="CHEBI:18277"/>
        <dbReference type="ChEBI" id="CHEBI:33019"/>
        <dbReference type="ChEBI" id="CHEBI:58017"/>
        <dbReference type="EC" id="2.4.2.18"/>
    </reaction>
</comment>
<comment type="cofactor">
    <cofactor evidence="1">
        <name>Mg(2+)</name>
        <dbReference type="ChEBI" id="CHEBI:18420"/>
    </cofactor>
    <text evidence="1">Binds 2 magnesium ions per monomer.</text>
</comment>
<comment type="pathway">
    <text evidence="1">Amino-acid biosynthesis; L-tryptophan biosynthesis; L-tryptophan from chorismate: step 2/5.</text>
</comment>
<comment type="subunit">
    <text evidence="1">Homodimer.</text>
</comment>
<comment type="similarity">
    <text evidence="1">Belongs to the anthranilate phosphoribosyltransferase family.</text>
</comment>
<dbReference type="EC" id="2.4.2.18" evidence="1"/>
<dbReference type="EMBL" id="BA000039">
    <property type="protein sequence ID" value="BAC09266.1"/>
    <property type="molecule type" value="Genomic_DNA"/>
</dbReference>
<dbReference type="RefSeq" id="NP_682504.1">
    <property type="nucleotide sequence ID" value="NC_004113.1"/>
</dbReference>
<dbReference type="RefSeq" id="WP_011057551.1">
    <property type="nucleotide sequence ID" value="NC_004113.1"/>
</dbReference>
<dbReference type="SMR" id="Q8DI76"/>
<dbReference type="STRING" id="197221.gene:10748318"/>
<dbReference type="EnsemblBacteria" id="BAC09266">
    <property type="protein sequence ID" value="BAC09266"/>
    <property type="gene ID" value="BAC09266"/>
</dbReference>
<dbReference type="KEGG" id="tel:tll1714"/>
<dbReference type="PATRIC" id="fig|197221.4.peg.1795"/>
<dbReference type="eggNOG" id="COG0547">
    <property type="taxonomic scope" value="Bacteria"/>
</dbReference>
<dbReference type="UniPathway" id="UPA00035">
    <property type="reaction ID" value="UER00041"/>
</dbReference>
<dbReference type="Proteomes" id="UP000000440">
    <property type="component" value="Chromosome"/>
</dbReference>
<dbReference type="GO" id="GO:0005829">
    <property type="term" value="C:cytosol"/>
    <property type="evidence" value="ECO:0007669"/>
    <property type="project" value="TreeGrafter"/>
</dbReference>
<dbReference type="GO" id="GO:0004048">
    <property type="term" value="F:anthranilate phosphoribosyltransferase activity"/>
    <property type="evidence" value="ECO:0007669"/>
    <property type="project" value="UniProtKB-UniRule"/>
</dbReference>
<dbReference type="GO" id="GO:0000287">
    <property type="term" value="F:magnesium ion binding"/>
    <property type="evidence" value="ECO:0007669"/>
    <property type="project" value="UniProtKB-UniRule"/>
</dbReference>
<dbReference type="GO" id="GO:0000162">
    <property type="term" value="P:L-tryptophan biosynthetic process"/>
    <property type="evidence" value="ECO:0007669"/>
    <property type="project" value="UniProtKB-UniRule"/>
</dbReference>
<dbReference type="FunFam" id="3.40.1030.10:FF:000002">
    <property type="entry name" value="Anthranilate phosphoribosyltransferase"/>
    <property type="match status" value="1"/>
</dbReference>
<dbReference type="Gene3D" id="3.40.1030.10">
    <property type="entry name" value="Nucleoside phosphorylase/phosphoribosyltransferase catalytic domain"/>
    <property type="match status" value="1"/>
</dbReference>
<dbReference type="Gene3D" id="1.20.970.10">
    <property type="entry name" value="Transferase, Pyrimidine Nucleoside Phosphorylase, Chain C"/>
    <property type="match status" value="1"/>
</dbReference>
<dbReference type="HAMAP" id="MF_00211">
    <property type="entry name" value="TrpD"/>
    <property type="match status" value="1"/>
</dbReference>
<dbReference type="InterPro" id="IPR005940">
    <property type="entry name" value="Anthranilate_Pribosyl_Tfrase"/>
</dbReference>
<dbReference type="InterPro" id="IPR000312">
    <property type="entry name" value="Glycosyl_Trfase_fam3"/>
</dbReference>
<dbReference type="InterPro" id="IPR017459">
    <property type="entry name" value="Glycosyl_Trfase_fam3_N_dom"/>
</dbReference>
<dbReference type="InterPro" id="IPR036320">
    <property type="entry name" value="Glycosyl_Trfase_fam3_N_dom_sf"/>
</dbReference>
<dbReference type="InterPro" id="IPR035902">
    <property type="entry name" value="Nuc_phospho_transferase"/>
</dbReference>
<dbReference type="NCBIfam" id="TIGR01245">
    <property type="entry name" value="trpD"/>
    <property type="match status" value="1"/>
</dbReference>
<dbReference type="PANTHER" id="PTHR43285">
    <property type="entry name" value="ANTHRANILATE PHOSPHORIBOSYLTRANSFERASE"/>
    <property type="match status" value="1"/>
</dbReference>
<dbReference type="PANTHER" id="PTHR43285:SF2">
    <property type="entry name" value="ANTHRANILATE PHOSPHORIBOSYLTRANSFERASE"/>
    <property type="match status" value="1"/>
</dbReference>
<dbReference type="Pfam" id="PF02885">
    <property type="entry name" value="Glycos_trans_3N"/>
    <property type="match status" value="1"/>
</dbReference>
<dbReference type="Pfam" id="PF00591">
    <property type="entry name" value="Glycos_transf_3"/>
    <property type="match status" value="1"/>
</dbReference>
<dbReference type="SUPFAM" id="SSF52418">
    <property type="entry name" value="Nucleoside phosphorylase/phosphoribosyltransferase catalytic domain"/>
    <property type="match status" value="1"/>
</dbReference>
<dbReference type="SUPFAM" id="SSF47648">
    <property type="entry name" value="Nucleoside phosphorylase/phosphoribosyltransferase N-terminal domain"/>
    <property type="match status" value="1"/>
</dbReference>
<accession>Q8DI76</accession>
<feature type="chain" id="PRO_0000154494" description="Anthranilate phosphoribosyltransferase">
    <location>
        <begin position="1"/>
        <end position="339"/>
    </location>
</feature>
<feature type="binding site" evidence="1">
    <location>
        <position position="81"/>
    </location>
    <ligand>
        <name>5-phospho-alpha-D-ribose 1-diphosphate</name>
        <dbReference type="ChEBI" id="CHEBI:58017"/>
    </ligand>
</feature>
<feature type="binding site" evidence="1">
    <location>
        <position position="81"/>
    </location>
    <ligand>
        <name>anthranilate</name>
        <dbReference type="ChEBI" id="CHEBI:16567"/>
        <label>1</label>
    </ligand>
</feature>
<feature type="binding site" evidence="1">
    <location>
        <begin position="84"/>
        <end position="85"/>
    </location>
    <ligand>
        <name>5-phospho-alpha-D-ribose 1-diphosphate</name>
        <dbReference type="ChEBI" id="CHEBI:58017"/>
    </ligand>
</feature>
<feature type="binding site" evidence="1">
    <location>
        <position position="89"/>
    </location>
    <ligand>
        <name>5-phospho-alpha-D-ribose 1-diphosphate</name>
        <dbReference type="ChEBI" id="CHEBI:58017"/>
    </ligand>
</feature>
<feature type="binding site" evidence="1">
    <location>
        <begin position="91"/>
        <end position="94"/>
    </location>
    <ligand>
        <name>5-phospho-alpha-D-ribose 1-diphosphate</name>
        <dbReference type="ChEBI" id="CHEBI:58017"/>
    </ligand>
</feature>
<feature type="binding site" evidence="1">
    <location>
        <position position="93"/>
    </location>
    <ligand>
        <name>Mg(2+)</name>
        <dbReference type="ChEBI" id="CHEBI:18420"/>
        <label>1</label>
    </ligand>
</feature>
<feature type="binding site" evidence="1">
    <location>
        <begin position="109"/>
        <end position="117"/>
    </location>
    <ligand>
        <name>5-phospho-alpha-D-ribose 1-diphosphate</name>
        <dbReference type="ChEBI" id="CHEBI:58017"/>
    </ligand>
</feature>
<feature type="binding site" evidence="1">
    <location>
        <position position="112"/>
    </location>
    <ligand>
        <name>anthranilate</name>
        <dbReference type="ChEBI" id="CHEBI:16567"/>
        <label>1</label>
    </ligand>
</feature>
<feature type="binding site" evidence="1">
    <location>
        <position position="121"/>
    </location>
    <ligand>
        <name>5-phospho-alpha-D-ribose 1-diphosphate</name>
        <dbReference type="ChEBI" id="CHEBI:58017"/>
    </ligand>
</feature>
<feature type="binding site" evidence="1">
    <location>
        <position position="165"/>
    </location>
    <ligand>
        <name>anthranilate</name>
        <dbReference type="ChEBI" id="CHEBI:16567"/>
        <label>2</label>
    </ligand>
</feature>
<feature type="binding site" evidence="1">
    <location>
        <position position="224"/>
    </location>
    <ligand>
        <name>Mg(2+)</name>
        <dbReference type="ChEBI" id="CHEBI:18420"/>
        <label>2</label>
    </ligand>
</feature>
<feature type="binding site" evidence="1">
    <location>
        <position position="225"/>
    </location>
    <ligand>
        <name>Mg(2+)</name>
        <dbReference type="ChEBI" id="CHEBI:18420"/>
        <label>1</label>
    </ligand>
</feature>
<feature type="binding site" evidence="1">
    <location>
        <position position="225"/>
    </location>
    <ligand>
        <name>Mg(2+)</name>
        <dbReference type="ChEBI" id="CHEBI:18420"/>
        <label>2</label>
    </ligand>
</feature>